<proteinExistence type="evidence at transcript level"/>
<evidence type="ECO:0000255" key="1">
    <source>
        <dbReference type="PROSITE-ProRule" id="PRU00142"/>
    </source>
</evidence>
<evidence type="ECO:0000255" key="2">
    <source>
        <dbReference type="PROSITE-ProRule" id="PRU00150"/>
    </source>
</evidence>
<evidence type="ECO:0000269" key="3">
    <source>
    </source>
</evidence>
<evidence type="ECO:0000269" key="4">
    <source>
    </source>
</evidence>
<evidence type="ECO:0000269" key="5">
    <source>
    </source>
</evidence>
<evidence type="ECO:0000269" key="6">
    <source>
    </source>
</evidence>
<evidence type="ECO:0000305" key="7"/>
<keyword id="KW-0611">Plant defense</keyword>
<keyword id="KW-1185">Reference proteome</keyword>
<keyword id="KW-0678">Repressor</keyword>
<keyword id="KW-0687">Ribonucleoprotein</keyword>
<keyword id="KW-0694">RNA-binding</keyword>
<keyword id="KW-0943">RNA-mediated gene silencing</keyword>
<keyword id="KW-0804">Transcription</keyword>
<keyword id="KW-0805">Transcription regulation</keyword>
<keyword id="KW-0810">Translation regulation</keyword>
<accession>Q84VQ0</accession>
<accession>Q56X15</accession>
<accession>Q84YI4</accession>
<reference key="1">
    <citation type="journal article" date="2003" name="Plant Physiol.">
        <title>The identification of candidate genes for a reverse genetic analysis of development and function in the Arabidopsis gynoecium.</title>
        <authorList>
            <person name="Scutt C.P."/>
            <person name="Vinauger-Douard M."/>
            <person name="Fourquin C."/>
            <person name="Ailhas J."/>
            <person name="Kuno N."/>
            <person name="Uchida K."/>
            <person name="Gaude T."/>
            <person name="Furuya M."/>
            <person name="Dumas C."/>
        </authorList>
    </citation>
    <scope>NUCLEOTIDE SEQUENCE [MRNA]</scope>
    <source>
        <strain>cv. Landsberg erecta</strain>
        <tissue>Anther</tissue>
        <tissue>Ovule</tissue>
    </source>
</reference>
<reference key="2">
    <citation type="journal article" date="2000" name="Nature">
        <title>Sequence and analysis of chromosome 5 of the plant Arabidopsis thaliana.</title>
        <authorList>
            <person name="Tabata S."/>
            <person name="Kaneko T."/>
            <person name="Nakamura Y."/>
            <person name="Kotani H."/>
            <person name="Kato T."/>
            <person name="Asamizu E."/>
            <person name="Miyajima N."/>
            <person name="Sasamoto S."/>
            <person name="Kimura T."/>
            <person name="Hosouchi T."/>
            <person name="Kawashima K."/>
            <person name="Kohara M."/>
            <person name="Matsumoto M."/>
            <person name="Matsuno A."/>
            <person name="Muraki A."/>
            <person name="Nakayama S."/>
            <person name="Nakazaki N."/>
            <person name="Naruo K."/>
            <person name="Okumura S."/>
            <person name="Shinpo S."/>
            <person name="Takeuchi C."/>
            <person name="Wada T."/>
            <person name="Watanabe A."/>
            <person name="Yamada M."/>
            <person name="Yasuda M."/>
            <person name="Sato S."/>
            <person name="de la Bastide M."/>
            <person name="Huang E."/>
            <person name="Spiegel L."/>
            <person name="Gnoj L."/>
            <person name="O'Shaughnessy A."/>
            <person name="Preston R."/>
            <person name="Habermann K."/>
            <person name="Murray J."/>
            <person name="Johnson D."/>
            <person name="Rohlfing T."/>
            <person name="Nelson J."/>
            <person name="Stoneking T."/>
            <person name="Pepin K."/>
            <person name="Spieth J."/>
            <person name="Sekhon M."/>
            <person name="Armstrong J."/>
            <person name="Becker M."/>
            <person name="Belter E."/>
            <person name="Cordum H."/>
            <person name="Cordes M."/>
            <person name="Courtney L."/>
            <person name="Courtney W."/>
            <person name="Dante M."/>
            <person name="Du H."/>
            <person name="Edwards J."/>
            <person name="Fryman J."/>
            <person name="Haakensen B."/>
            <person name="Lamar E."/>
            <person name="Latreille P."/>
            <person name="Leonard S."/>
            <person name="Meyer R."/>
            <person name="Mulvaney E."/>
            <person name="Ozersky P."/>
            <person name="Riley A."/>
            <person name="Strowmatt C."/>
            <person name="Wagner-McPherson C."/>
            <person name="Wollam A."/>
            <person name="Yoakum M."/>
            <person name="Bell M."/>
            <person name="Dedhia N."/>
            <person name="Parnell L."/>
            <person name="Shah R."/>
            <person name="Rodriguez M."/>
            <person name="Hoon See L."/>
            <person name="Vil D."/>
            <person name="Baker J."/>
            <person name="Kirchoff K."/>
            <person name="Toth K."/>
            <person name="King L."/>
            <person name="Bahret A."/>
            <person name="Miller B."/>
            <person name="Marra M.A."/>
            <person name="Martienssen R."/>
            <person name="McCombie W.R."/>
            <person name="Wilson R.K."/>
            <person name="Murphy G."/>
            <person name="Bancroft I."/>
            <person name="Volckaert G."/>
            <person name="Wambutt R."/>
            <person name="Duesterhoeft A."/>
            <person name="Stiekema W."/>
            <person name="Pohl T."/>
            <person name="Entian K.-D."/>
            <person name="Terryn N."/>
            <person name="Hartley N."/>
            <person name="Bent E."/>
            <person name="Johnson S."/>
            <person name="Langham S.-A."/>
            <person name="McCullagh B."/>
            <person name="Robben J."/>
            <person name="Grymonprez B."/>
            <person name="Zimmermann W."/>
            <person name="Ramsperger U."/>
            <person name="Wedler H."/>
            <person name="Balke K."/>
            <person name="Wedler E."/>
            <person name="Peters S."/>
            <person name="van Staveren M."/>
            <person name="Dirkse W."/>
            <person name="Mooijman P."/>
            <person name="Klein Lankhorst R."/>
            <person name="Weitzenegger T."/>
            <person name="Bothe G."/>
            <person name="Rose M."/>
            <person name="Hauf J."/>
            <person name="Berneiser S."/>
            <person name="Hempel S."/>
            <person name="Feldpausch M."/>
            <person name="Lamberth S."/>
            <person name="Villarroel R."/>
            <person name="Gielen J."/>
            <person name="Ardiles W."/>
            <person name="Bents O."/>
            <person name="Lemcke K."/>
            <person name="Kolesov G."/>
            <person name="Mayer K.F.X."/>
            <person name="Rudd S."/>
            <person name="Schoof H."/>
            <person name="Schueller C."/>
            <person name="Zaccaria P."/>
            <person name="Mewes H.-W."/>
            <person name="Bevan M."/>
            <person name="Fransz P.F."/>
        </authorList>
    </citation>
    <scope>NUCLEOTIDE SEQUENCE [LARGE SCALE GENOMIC DNA]</scope>
    <source>
        <strain>cv. Columbia</strain>
    </source>
</reference>
<reference key="3">
    <citation type="journal article" date="2017" name="Plant J.">
        <title>Araport11: a complete reannotation of the Arabidopsis thaliana reference genome.</title>
        <authorList>
            <person name="Cheng C.Y."/>
            <person name="Krishnakumar V."/>
            <person name="Chan A.P."/>
            <person name="Thibaud-Nissen F."/>
            <person name="Schobel S."/>
            <person name="Town C.D."/>
        </authorList>
    </citation>
    <scope>GENOME REANNOTATION</scope>
    <source>
        <strain>cv. Columbia</strain>
    </source>
</reference>
<reference key="4">
    <citation type="submission" date="2005-03" db="EMBL/GenBank/DDBJ databases">
        <title>Large-scale analysis of RIKEN Arabidopsis full-length (RAFL) cDNAs.</title>
        <authorList>
            <person name="Totoki Y."/>
            <person name="Seki M."/>
            <person name="Ishida J."/>
            <person name="Nakajima M."/>
            <person name="Enju A."/>
            <person name="Kamiya A."/>
            <person name="Narusaka M."/>
            <person name="Shin-i T."/>
            <person name="Nakagawa M."/>
            <person name="Sakamoto N."/>
            <person name="Oishi K."/>
            <person name="Kohara Y."/>
            <person name="Kobayashi M."/>
            <person name="Toyoda A."/>
            <person name="Sakaki Y."/>
            <person name="Sakurai T."/>
            <person name="Iida K."/>
            <person name="Akiyama K."/>
            <person name="Satou M."/>
            <person name="Toyoda T."/>
            <person name="Konagaya A."/>
            <person name="Carninci P."/>
            <person name="Kawai J."/>
            <person name="Hayashizaki Y."/>
            <person name="Shinozaki K."/>
        </authorList>
    </citation>
    <scope>NUCLEOTIDE SEQUENCE [LARGE SCALE MRNA] OF 317-896</scope>
    <source>
        <strain>cv. Columbia</strain>
    </source>
</reference>
<reference key="5">
    <citation type="journal article" date="2007" name="Curr. Biol.">
        <title>The Polerovirus silencing suppressor P0 targets ARGONAUTE proteins for degradation.</title>
        <authorList>
            <person name="Baumberger N."/>
            <person name="Tsai C.-H."/>
            <person name="Lie M."/>
            <person name="Havecker E."/>
            <person name="Baulcombe D.C."/>
        </authorList>
    </citation>
    <scope>FUNCTION</scope>
</reference>
<reference key="6">
    <citation type="journal article" date="2010" name="Nature">
        <title>Control of female gamete formation by a small RNA pathway in Arabidopsis.</title>
        <authorList>
            <person name="Olmedo-Monfil V."/>
            <person name="Duran-Figueroa N."/>
            <person name="Arteaga-Vazquez M."/>
            <person name="Demesa-Arevalo E."/>
            <person name="Autran D."/>
            <person name="Grimanelli D."/>
            <person name="Slotkin R.K."/>
            <person name="Martienssen R.A."/>
            <person name="Vielle-Calzada J.P."/>
        </authorList>
    </citation>
    <scope>FUNCTION</scope>
    <scope>DEVELOPMENTAL STAGE</scope>
    <scope>DISRUPTION PHENOTYPE</scope>
</reference>
<reference key="7">
    <citation type="journal article" date="2010" name="Plant Cell">
        <title>The Arabidopsis RNA-directed DNA methylation argonautes functionally diverge based on their expression and interaction with target loci.</title>
        <authorList>
            <person name="Havecker E.R."/>
            <person name="Wallbridge L.M."/>
            <person name="Hardcastle T.J."/>
            <person name="Bush M.S."/>
            <person name="Kelly K.A."/>
            <person name="Dunn R.M."/>
            <person name="Schwach F."/>
            <person name="Doonan J.H."/>
            <person name="Baulcombe D.C."/>
        </authorList>
    </citation>
    <scope>FUNCTION</scope>
    <scope>TISSUE SPECIFICITY</scope>
</reference>
<reference key="8">
    <citation type="journal article" date="2010" name="Plant Signal. Behav.">
        <title>ARGONAUTE9-dependent silencing of transposable elements in pericentromeric regions of Arabidopsis.</title>
        <authorList>
            <person name="Duran-Figueroa N."/>
            <person name="Vielle-Calzada J.P."/>
        </authorList>
    </citation>
    <scope>FUNCTION</scope>
</reference>
<protein>
    <recommendedName>
        <fullName>Protein argonaute 9</fullName>
    </recommendedName>
</protein>
<sequence>MDSDEPNGSGLPPPPPFVPANLVPEVEPVKKNILLPMARPRGSGSKGQKIPLLTNHFGVKFNKPSGYFFHYSVAINYEDGRPVEAKGIGRKILDKVQETYQSDLGAKYFAYDGEKTLFTVGALPSNKLDFSVVLEEIPSSRNHAGNDTNDADRKRSRRPNQTKKFMVEISYAAKIPMQAIASALQGKETENLQDALRVLDIILRQSAARQGCLLVRQSFFHNDVKNFVPIGGGVSGCRGFHSSFRTTQGGLSLNIDTSTTMIVQPGPVVDFLLANQNKKDPYGMDWNKARRVLKNLRVQITLSNREYKISGLSEHSCKDQLFTWRKPNDKGEFEEVEITVLNYYKERNIEVRYSGDFPCINVGKPKRPTYFPIEFCNLVSLQRYTKSLTNFQRAALVEKSRQKPPERMASLTKGLKDSNYNADPVLQDSGVSIITNFTQVEGRILPTPMLKVGKGENLSPIKGKWNFMRKTLAEPTTVTRWAVVNFSARCDTNTLIRDLIKCGREKGINVEPPFKDVINENPQFRNAPATVRVENMFEQIKSKLPKPPLFLLCILAERKNSDVYGPWKKKNLVDLGIVTQCIAPTRLNDQYLTNVLLKINAKLGGLNSLLAMERSPAMPKVTQVPTIIVGMDVSHGSPGQSDIPSIAAVVSSRQWPLISKYKACVRTQSRKMEMIDNLFKPVNGKDEGMFRELLLDFYYSSENRKPEHIIIFRDGVSESQFNQVLNIELDQMMQACKFLDDTWHPKFTVIVAQKNHHTKFFQSRGPDNVPPGTIIDSQICHPRNFDFYLCAHAGMIGTTRPTHYHVLYDEIGFATDDLQELVHSLSYVYQRSTTAISVVAPVCYAHLAAAQMGTVMKYEELSETSSSHGGITTPGAVPVPPMPQLHNNVSTSMFFC</sequence>
<organism>
    <name type="scientific">Arabidopsis thaliana</name>
    <name type="common">Mouse-ear cress</name>
    <dbReference type="NCBI Taxonomy" id="3702"/>
    <lineage>
        <taxon>Eukaryota</taxon>
        <taxon>Viridiplantae</taxon>
        <taxon>Streptophyta</taxon>
        <taxon>Embryophyta</taxon>
        <taxon>Tracheophyta</taxon>
        <taxon>Spermatophyta</taxon>
        <taxon>Magnoliopsida</taxon>
        <taxon>eudicotyledons</taxon>
        <taxon>Gunneridae</taxon>
        <taxon>Pentapetalae</taxon>
        <taxon>rosids</taxon>
        <taxon>malvids</taxon>
        <taxon>Brassicales</taxon>
        <taxon>Brassicaceae</taxon>
        <taxon>Camelineae</taxon>
        <taxon>Arabidopsis</taxon>
    </lineage>
</organism>
<dbReference type="EMBL" id="AJ544236">
    <property type="protein sequence ID" value="CAD66636.1"/>
    <property type="molecule type" value="mRNA"/>
</dbReference>
<dbReference type="EMBL" id="AC140977">
    <property type="protein sequence ID" value="AAO73892.1"/>
    <property type="status" value="ALT_SEQ"/>
    <property type="molecule type" value="Genomic_DNA"/>
</dbReference>
<dbReference type="EMBL" id="CP002688">
    <property type="protein sequence ID" value="AED92940.1"/>
    <property type="molecule type" value="Genomic_DNA"/>
</dbReference>
<dbReference type="EMBL" id="AK221864">
    <property type="protein sequence ID" value="BAD94152.1"/>
    <property type="molecule type" value="mRNA"/>
</dbReference>
<dbReference type="RefSeq" id="NP_197613.2">
    <property type="nucleotide sequence ID" value="NM_122122.3"/>
</dbReference>
<dbReference type="SMR" id="Q84VQ0"/>
<dbReference type="BioGRID" id="17516">
    <property type="interactions" value="1"/>
</dbReference>
<dbReference type="FunCoup" id="Q84VQ0">
    <property type="interactions" value="12"/>
</dbReference>
<dbReference type="IntAct" id="Q84VQ0">
    <property type="interactions" value="1"/>
</dbReference>
<dbReference type="STRING" id="3702.Q84VQ0"/>
<dbReference type="GlyGen" id="Q84VQ0">
    <property type="glycosylation" value="1 site"/>
</dbReference>
<dbReference type="iPTMnet" id="Q84VQ0"/>
<dbReference type="PaxDb" id="3702-AT5G21150.1"/>
<dbReference type="ProteomicsDB" id="244664"/>
<dbReference type="EnsemblPlants" id="AT5G21150.1">
    <property type="protein sequence ID" value="AT5G21150.1"/>
    <property type="gene ID" value="AT5G21150"/>
</dbReference>
<dbReference type="GeneID" id="832241"/>
<dbReference type="Gramene" id="AT5G21150.1">
    <property type="protein sequence ID" value="AT5G21150.1"/>
    <property type="gene ID" value="AT5G21150"/>
</dbReference>
<dbReference type="KEGG" id="ath:AT5G21150"/>
<dbReference type="Araport" id="AT5G21150"/>
<dbReference type="TAIR" id="AT5G21150">
    <property type="gene designation" value="AGO9"/>
</dbReference>
<dbReference type="eggNOG" id="KOG1041">
    <property type="taxonomic scope" value="Eukaryota"/>
</dbReference>
<dbReference type="HOGENOM" id="CLU_004544_2_0_1"/>
<dbReference type="InParanoid" id="Q84VQ0"/>
<dbReference type="OMA" id="AKIPMHA"/>
<dbReference type="OrthoDB" id="10252740at2759"/>
<dbReference type="PhylomeDB" id="Q84VQ0"/>
<dbReference type="PRO" id="PR:Q84VQ0"/>
<dbReference type="Proteomes" id="UP000006548">
    <property type="component" value="Chromosome 5"/>
</dbReference>
<dbReference type="ExpressionAtlas" id="Q84VQ0">
    <property type="expression patterns" value="baseline and differential"/>
</dbReference>
<dbReference type="GO" id="GO:0005737">
    <property type="term" value="C:cytoplasm"/>
    <property type="evidence" value="ECO:0000314"/>
    <property type="project" value="TAIR"/>
</dbReference>
<dbReference type="GO" id="GO:0005634">
    <property type="term" value="C:nucleus"/>
    <property type="evidence" value="ECO:0000314"/>
    <property type="project" value="TAIR"/>
</dbReference>
<dbReference type="GO" id="GO:1990904">
    <property type="term" value="C:ribonucleoprotein complex"/>
    <property type="evidence" value="ECO:0007669"/>
    <property type="project" value="UniProtKB-KW"/>
</dbReference>
<dbReference type="GO" id="GO:0035197">
    <property type="term" value="F:siRNA binding"/>
    <property type="evidence" value="ECO:0000314"/>
    <property type="project" value="TAIR"/>
</dbReference>
<dbReference type="GO" id="GO:0051607">
    <property type="term" value="P:defense response to virus"/>
    <property type="evidence" value="ECO:0000314"/>
    <property type="project" value="TAIR"/>
</dbReference>
<dbReference type="GO" id="GO:1904159">
    <property type="term" value="P:megasporocyte differentiation"/>
    <property type="evidence" value="ECO:0000315"/>
    <property type="project" value="TAIR"/>
</dbReference>
<dbReference type="GO" id="GO:0009554">
    <property type="term" value="P:megasporogenesis"/>
    <property type="evidence" value="ECO:0000315"/>
    <property type="project" value="TAIR"/>
</dbReference>
<dbReference type="GO" id="GO:0048481">
    <property type="term" value="P:plant ovule development"/>
    <property type="evidence" value="ECO:0000315"/>
    <property type="project" value="TAIR"/>
</dbReference>
<dbReference type="GO" id="GO:0006417">
    <property type="term" value="P:regulation of translation"/>
    <property type="evidence" value="ECO:0007669"/>
    <property type="project" value="UniProtKB-KW"/>
</dbReference>
<dbReference type="GO" id="GO:0031047">
    <property type="term" value="P:regulatory ncRNA-mediated gene silencing"/>
    <property type="evidence" value="ECO:0007669"/>
    <property type="project" value="UniProtKB-KW"/>
</dbReference>
<dbReference type="CDD" id="cd02846">
    <property type="entry name" value="PAZ_argonaute_like"/>
    <property type="match status" value="1"/>
</dbReference>
<dbReference type="CDD" id="cd04657">
    <property type="entry name" value="Piwi_ago-like"/>
    <property type="match status" value="1"/>
</dbReference>
<dbReference type="FunFam" id="3.30.420.10:FF:000091">
    <property type="entry name" value="Protein argonaute 3"/>
    <property type="match status" value="1"/>
</dbReference>
<dbReference type="FunFam" id="2.170.260.10:FF:000008">
    <property type="entry name" value="Protein argonaute 7"/>
    <property type="match status" value="1"/>
</dbReference>
<dbReference type="Gene3D" id="3.40.50.2300">
    <property type="match status" value="1"/>
</dbReference>
<dbReference type="Gene3D" id="2.170.260.10">
    <property type="entry name" value="paz domain"/>
    <property type="match status" value="1"/>
</dbReference>
<dbReference type="Gene3D" id="3.30.420.10">
    <property type="entry name" value="Ribonuclease H-like superfamily/Ribonuclease H"/>
    <property type="match status" value="1"/>
</dbReference>
<dbReference type="InterPro" id="IPR014811">
    <property type="entry name" value="ArgoL1"/>
</dbReference>
<dbReference type="InterPro" id="IPR032472">
    <property type="entry name" value="ArgoL2"/>
</dbReference>
<dbReference type="InterPro" id="IPR032474">
    <property type="entry name" value="Argonaute_N"/>
</dbReference>
<dbReference type="InterPro" id="IPR003100">
    <property type="entry name" value="PAZ_dom"/>
</dbReference>
<dbReference type="InterPro" id="IPR036085">
    <property type="entry name" value="PAZ_dom_sf"/>
</dbReference>
<dbReference type="InterPro" id="IPR003165">
    <property type="entry name" value="Piwi"/>
</dbReference>
<dbReference type="InterPro" id="IPR045246">
    <property type="entry name" value="Piwi_ago-like"/>
</dbReference>
<dbReference type="InterPro" id="IPR012337">
    <property type="entry name" value="RNaseH-like_sf"/>
</dbReference>
<dbReference type="InterPro" id="IPR036397">
    <property type="entry name" value="RNaseH_sf"/>
</dbReference>
<dbReference type="PANTHER" id="PTHR22891">
    <property type="entry name" value="EUKARYOTIC TRANSLATION INITIATION FACTOR 2C"/>
    <property type="match status" value="1"/>
</dbReference>
<dbReference type="Pfam" id="PF08699">
    <property type="entry name" value="ArgoL1"/>
    <property type="match status" value="1"/>
</dbReference>
<dbReference type="Pfam" id="PF16488">
    <property type="entry name" value="ArgoL2"/>
    <property type="match status" value="1"/>
</dbReference>
<dbReference type="Pfam" id="PF16486">
    <property type="entry name" value="ArgoN"/>
    <property type="match status" value="1"/>
</dbReference>
<dbReference type="Pfam" id="PF02170">
    <property type="entry name" value="PAZ"/>
    <property type="match status" value="1"/>
</dbReference>
<dbReference type="Pfam" id="PF02171">
    <property type="entry name" value="Piwi"/>
    <property type="match status" value="1"/>
</dbReference>
<dbReference type="SMART" id="SM01163">
    <property type="entry name" value="DUF1785"/>
    <property type="match status" value="1"/>
</dbReference>
<dbReference type="SMART" id="SM00949">
    <property type="entry name" value="PAZ"/>
    <property type="match status" value="1"/>
</dbReference>
<dbReference type="SMART" id="SM00950">
    <property type="entry name" value="Piwi"/>
    <property type="match status" value="1"/>
</dbReference>
<dbReference type="SUPFAM" id="SSF101690">
    <property type="entry name" value="PAZ domain"/>
    <property type="match status" value="1"/>
</dbReference>
<dbReference type="SUPFAM" id="SSF53098">
    <property type="entry name" value="Ribonuclease H-like"/>
    <property type="match status" value="1"/>
</dbReference>
<dbReference type="PROSITE" id="PS50821">
    <property type="entry name" value="PAZ"/>
    <property type="match status" value="1"/>
</dbReference>
<dbReference type="PROSITE" id="PS50822">
    <property type="entry name" value="PIWI"/>
    <property type="match status" value="1"/>
</dbReference>
<feature type="chain" id="PRO_0000404671" description="Protein argonaute 9">
    <location>
        <begin position="1"/>
        <end position="896"/>
    </location>
</feature>
<feature type="domain" description="PAZ" evidence="1">
    <location>
        <begin position="267"/>
        <end position="380"/>
    </location>
</feature>
<feature type="domain" description="Piwi" evidence="2">
    <location>
        <begin position="550"/>
        <end position="857"/>
    </location>
</feature>
<feature type="sequence conflict" description="In Ref. 1; CAD66636." evidence="7" ref="1">
    <original>V</original>
    <variation>I</variation>
    <location>
        <position position="268"/>
    </location>
</feature>
<feature type="sequence conflict" description="In Ref. 4; BAD94152." evidence="7" ref="4">
    <original>R</original>
    <variation>C</variation>
    <location>
        <position position="443"/>
    </location>
</feature>
<feature type="sequence conflict" description="In Ref. 1; CAD66636." evidence="7" ref="1">
    <original>N</original>
    <variation>D</variation>
    <location>
        <position position="571"/>
    </location>
</feature>
<feature type="sequence conflict" description="In Ref. 4; BAD94152." evidence="7" ref="4">
    <original>P</original>
    <variation>T</variation>
    <location>
        <position position="616"/>
    </location>
</feature>
<feature type="sequence conflict" description="In Ref. 1; CAD66636." evidence="7" ref="1">
    <original>Y</original>
    <variation>H</variation>
    <location>
        <position position="827"/>
    </location>
</feature>
<feature type="sequence conflict" description="In Ref. 4; BAD94152." evidence="7" ref="4">
    <original>I</original>
    <variation>M</variation>
    <location>
        <position position="871"/>
    </location>
</feature>
<feature type="sequence conflict" description="In Ref. 1; CAD66636." evidence="7" ref="1">
    <original>A</original>
    <variation>T</variation>
    <location>
        <position position="876"/>
    </location>
</feature>
<gene>
    <name type="primary">AGO9</name>
    <name type="ordered locus">At5g21150</name>
    <name type="ORF">T10F18.180</name>
</gene>
<comment type="function">
    <text evidence="3 4 5 6">Involved in RNA-mediated post-transcriptional gene silencing (PTGS). Main component of the RNA-induced silencing complex (RISC) that binds to a short guide RNA such as a microRNA (miRNA) or small interfering RNA (siRNA). RISC uses the mature miRNA or siRNA as a guide for slicer-directed cleavage of homologous mRNAs to repress gene expression. Associates preferentially with small RNAs of 24 nucleotide in length with a 5' terminal adenosine. Interacts with 24 nucleotide sRNAs derived from transposable elements (TEs). Required to silence pericentrometric-located TEs in female gametes and their accessory cells. Necessary to inactivate a significant proportion of long terminal repeat retrotransposons (LTRs) in the ovule. Required to specify cell fate in ovule. Involved in the control of female gamete formation by restricting the specification of gametophyte precursors in a dosage-dependent, non-cell-autonomous manner. Targeted by turnip yellows virus (TuYV) protein P0 (via F-box-like domain) for probable proteasome degradation and thereby inactivating AGO9 function in RNA silencing.</text>
</comment>
<comment type="tissue specificity">
    <text evidence="4">Expressed in embryonic shoot apex region, pollen and developing ovules.</text>
</comment>
<comment type="developmental stage">
    <text evidence="5">Expressed in all cells of the young ovule primordium at pre-meiotic stages, including the L1 layer. At early stages of female gametogenesis, expression is restricted to the distal (micropylar) portion of the developing ovule, but is absent from the 1-nuclear female gametophyte. In fully differentiated ovules, expressed at the proximal and distal poles but not in the female gametophyte.</text>
</comment>
<comment type="disruption phenotype">
    <text evidence="5">Differentiation of multiple gametic cells able to initiate gametogenesis. Abnormally enlarged sub-epidermal cells in developing ovules.</text>
</comment>
<comment type="similarity">
    <text evidence="7">Belongs to the argonaute family. Ago subfamily.</text>
</comment>
<comment type="sequence caution" evidence="7">
    <conflict type="erroneous gene model prediction">
        <sequence resource="EMBL-CDS" id="AAO73892"/>
    </conflict>
</comment>
<name>AGO9_ARATH</name>